<proteinExistence type="inferred from homology"/>
<comment type="function">
    <text evidence="1">Probably a ribosomal protein or a ribosome-associated protein.</text>
</comment>
<comment type="subunit">
    <text evidence="1">Part of the 30S ribosomal subunit.</text>
</comment>
<comment type="subcellular location">
    <subcellularLocation>
        <location>Plastid</location>
        <location>Chloroplast</location>
    </subcellularLocation>
</comment>
<comment type="similarity">
    <text evidence="3">Belongs to the chloroplast-specific ribosomal protein cS23 family.</text>
</comment>
<gene>
    <name type="primary">ycf65</name>
</gene>
<organism>
    <name type="scientific">Euglena stellata</name>
    <dbReference type="NCBI Taxonomy" id="38278"/>
    <lineage>
        <taxon>Eukaryota</taxon>
        <taxon>Discoba</taxon>
        <taxon>Euglenozoa</taxon>
        <taxon>Euglenida</taxon>
        <taxon>Spirocuta</taxon>
        <taxon>Euglenophyceae</taxon>
        <taxon>Euglenales</taxon>
        <taxon>Euglenaceae</taxon>
        <taxon>Euglena</taxon>
    </lineage>
</organism>
<feature type="chain" id="PRO_0000216759" description="Small ribosomal subunit protein cS23">
    <location>
        <begin position="1"/>
        <end position="101"/>
    </location>
</feature>
<accession>Q9BAC0</accession>
<geneLocation type="chloroplast"/>
<sequence length="101" mass="12070">MSSFILKFLWLEKSVAVGLDQKIGDRTTPVTEFFFWPQHDAWEEMKNFLEDKSWIDQSEVVILLNQITEVINYWQEKTELQKRDISHLTEKFPNVVFVGFD</sequence>
<protein>
    <recommendedName>
        <fullName evidence="2">Small ribosomal subunit protein cS23</fullName>
    </recommendedName>
    <alternativeName>
        <fullName>30S ribosomal protein 3, chloroplastic</fullName>
        <shortName>PSRP-3</shortName>
    </alternativeName>
</protein>
<dbReference type="EMBL" id="AF347933">
    <property type="protein sequence ID" value="AAK27694.1"/>
    <property type="molecule type" value="Genomic_DNA"/>
</dbReference>
<dbReference type="SMR" id="Q9BAC0"/>
<dbReference type="GO" id="GO:0009507">
    <property type="term" value="C:chloroplast"/>
    <property type="evidence" value="ECO:0007669"/>
    <property type="project" value="UniProtKB-SubCell"/>
</dbReference>
<dbReference type="GO" id="GO:1990904">
    <property type="term" value="C:ribonucleoprotein complex"/>
    <property type="evidence" value="ECO:0007669"/>
    <property type="project" value="UniProtKB-KW"/>
</dbReference>
<dbReference type="GO" id="GO:0005840">
    <property type="term" value="C:ribosome"/>
    <property type="evidence" value="ECO:0007669"/>
    <property type="project" value="UniProtKB-KW"/>
</dbReference>
<dbReference type="GO" id="GO:0003735">
    <property type="term" value="F:structural constituent of ribosome"/>
    <property type="evidence" value="ECO:0007669"/>
    <property type="project" value="InterPro"/>
</dbReference>
<dbReference type="GO" id="GO:0006412">
    <property type="term" value="P:translation"/>
    <property type="evidence" value="ECO:0007669"/>
    <property type="project" value="UniProtKB-UniRule"/>
</dbReference>
<dbReference type="Gene3D" id="3.30.390.140">
    <property type="match status" value="1"/>
</dbReference>
<dbReference type="HAMAP" id="MF_00619">
    <property type="entry name" value="Ribosomal_plastid_cS23"/>
    <property type="match status" value="1"/>
</dbReference>
<dbReference type="InterPro" id="IPR038447">
    <property type="entry name" value="PSRP-3/Ycf65_sf"/>
</dbReference>
<dbReference type="InterPro" id="IPR006924">
    <property type="entry name" value="Ribosomal_PSRP3/Ycf65"/>
</dbReference>
<dbReference type="PANTHER" id="PTHR35108">
    <property type="entry name" value="30S RIBOSOMAL PROTEIN 3, CHLOROPLASTIC"/>
    <property type="match status" value="1"/>
</dbReference>
<dbReference type="PANTHER" id="PTHR35108:SF1">
    <property type="entry name" value="OS04G0461100 PROTEIN"/>
    <property type="match status" value="1"/>
</dbReference>
<dbReference type="Pfam" id="PF04839">
    <property type="entry name" value="PSRP-3_Ycf65"/>
    <property type="match status" value="1"/>
</dbReference>
<reference key="1">
    <citation type="submission" date="2001-02" db="EMBL/GenBank/DDBJ databases">
        <title>An evolutionary study of ycf65 in Euglena chloroplasts.</title>
        <authorList>
            <person name="Hallick R.B."/>
            <person name="De Armond R.L."/>
        </authorList>
    </citation>
    <scope>NUCLEOTIDE SEQUENCE [GENOMIC DNA]</scope>
</reference>
<evidence type="ECO:0000250" key="1"/>
<evidence type="ECO:0000255" key="2">
    <source>
        <dbReference type="HAMAP-Rule" id="MF_00619"/>
    </source>
</evidence>
<evidence type="ECO:0000305" key="3"/>
<keyword id="KW-0150">Chloroplast</keyword>
<keyword id="KW-0934">Plastid</keyword>
<keyword id="KW-0687">Ribonucleoprotein</keyword>
<keyword id="KW-0689">Ribosomal protein</keyword>
<name>RRP3_EUGST</name>